<evidence type="ECO:0000250" key="1">
    <source>
        <dbReference type="UniProtKB" id="Q3TQR0"/>
    </source>
</evidence>
<evidence type="ECO:0000250" key="2">
    <source>
        <dbReference type="UniProtKB" id="Q9UHJ9"/>
    </source>
</evidence>
<evidence type="ECO:0000255" key="3"/>
<evidence type="ECO:0000269" key="4">
    <source>
    </source>
</evidence>
<evidence type="ECO:0000269" key="5">
    <source>
    </source>
</evidence>
<evidence type="ECO:0000305" key="6"/>
<evidence type="ECO:0000305" key="7">
    <source>
    </source>
</evidence>
<evidence type="ECO:0000305" key="8">
    <source>
    </source>
</evidence>
<accession>Q2ABP2</accession>
<sequence length="254" mass="29426">MYQVPLTLDRDGTLVRLRFTMVALITVCCPLVAFLFCILWSLLFHFKETTSTHCGVPNYLPSVSSAIGGEVPQRYVWRFCIGLHSAPRFLAAFAYWNHYLSCASPCPGYRLLCRLNFSLNVVENLALLVLTYVSSSEDFTIHENAFIVFIAASLSYMLLTCILWRLTKKHTVSQEDRKSYSWKQRLFIINFISFFSALAVYFRHNMYCEAGVYTIFAILEYTVVLTNMAFHMTAWWDFGNKELLITSQPEEKRF</sequence>
<protein>
    <recommendedName>
        <fullName evidence="6">Acyltransferase PGAP2</fullName>
        <ecNumber evidence="8">2.3.-.-</ecNumber>
    </recommendedName>
    <alternativeName>
        <fullName>FGF receptor-activating protein 1</fullName>
    </alternativeName>
    <alternativeName>
        <fullName>Post-GPI attachment to proteins factor 2</fullName>
    </alternativeName>
</protein>
<organism>
    <name type="scientific">Cricetulus griseus</name>
    <name type="common">Chinese hamster</name>
    <name type="synonym">Cricetulus barabensis griseus</name>
    <dbReference type="NCBI Taxonomy" id="10029"/>
    <lineage>
        <taxon>Eukaryota</taxon>
        <taxon>Metazoa</taxon>
        <taxon>Chordata</taxon>
        <taxon>Craniata</taxon>
        <taxon>Vertebrata</taxon>
        <taxon>Euteleostomi</taxon>
        <taxon>Mammalia</taxon>
        <taxon>Eutheria</taxon>
        <taxon>Euarchontoglires</taxon>
        <taxon>Glires</taxon>
        <taxon>Rodentia</taxon>
        <taxon>Myomorpha</taxon>
        <taxon>Muroidea</taxon>
        <taxon>Cricetidae</taxon>
        <taxon>Cricetinae</taxon>
        <taxon>Cricetulus</taxon>
    </lineage>
</organism>
<dbReference type="EC" id="2.3.-.-" evidence="8"/>
<dbReference type="EMBL" id="AB236145">
    <property type="protein sequence ID" value="BAE80229.1"/>
    <property type="molecule type" value="mRNA"/>
</dbReference>
<dbReference type="RefSeq" id="NP_001233740.1">
    <property type="nucleotide sequence ID" value="NM_001246811.1"/>
</dbReference>
<dbReference type="PaxDb" id="10029-NP_001233740.1"/>
<dbReference type="Ensembl" id="ENSCGRT00001027357.1">
    <property type="protein sequence ID" value="ENSCGRP00001023112.1"/>
    <property type="gene ID" value="ENSCGRG00001021425.1"/>
</dbReference>
<dbReference type="GeneID" id="100689385"/>
<dbReference type="KEGG" id="cge:100689385"/>
<dbReference type="CTD" id="27315"/>
<dbReference type="eggNOG" id="KOG3979">
    <property type="taxonomic scope" value="Eukaryota"/>
</dbReference>
<dbReference type="GeneTree" id="ENSGT00510000047299"/>
<dbReference type="OrthoDB" id="68581at2759"/>
<dbReference type="Proteomes" id="UP000694386">
    <property type="component" value="Unplaced"/>
</dbReference>
<dbReference type="Proteomes" id="UP001108280">
    <property type="component" value="Chromosome 3"/>
</dbReference>
<dbReference type="GO" id="GO:0005789">
    <property type="term" value="C:endoplasmic reticulum membrane"/>
    <property type="evidence" value="ECO:0000250"/>
    <property type="project" value="UniProtKB"/>
</dbReference>
<dbReference type="GO" id="GO:0000139">
    <property type="term" value="C:Golgi membrane"/>
    <property type="evidence" value="ECO:0000250"/>
    <property type="project" value="UniProtKB"/>
</dbReference>
<dbReference type="GO" id="GO:0006506">
    <property type="term" value="P:GPI anchor biosynthetic process"/>
    <property type="evidence" value="ECO:0000250"/>
    <property type="project" value="UniProtKB"/>
</dbReference>
<dbReference type="InterPro" id="IPR019402">
    <property type="entry name" value="Frag1/DRAM/Sfk1"/>
</dbReference>
<dbReference type="InterPro" id="IPR039545">
    <property type="entry name" value="PGAP2"/>
</dbReference>
<dbReference type="PANTHER" id="PTHR12892">
    <property type="entry name" value="FGF RECEPTOR ACTIVATING PROTEIN 1"/>
    <property type="match status" value="1"/>
</dbReference>
<dbReference type="PANTHER" id="PTHR12892:SF11">
    <property type="entry name" value="POST-GPI ATTACHMENT TO PROTEINS FACTOR 2"/>
    <property type="match status" value="1"/>
</dbReference>
<dbReference type="Pfam" id="PF10277">
    <property type="entry name" value="Frag1"/>
    <property type="match status" value="1"/>
</dbReference>
<gene>
    <name evidence="2" type="primary">Pgap2</name>
    <name type="synonym">Frag1</name>
</gene>
<reference key="1">
    <citation type="journal article" date="2006" name="Mol. Biol. Cell">
        <title>PGAP2 is essential for correct processing and stable expression of GPI-anchored proteins.</title>
        <authorList>
            <person name="Tashima Y."/>
            <person name="Taguchi R."/>
            <person name="Murata C."/>
            <person name="Ashida H."/>
            <person name="Kinoshita T."/>
            <person name="Maeda Y."/>
        </authorList>
    </citation>
    <scope>NUCLEOTIDE SEQUENCE [MRNA]</scope>
    <scope>FUNCTION</scope>
</reference>
<reference key="2">
    <citation type="journal article" date="2007" name="Mol. Biol. Cell">
        <title>Fatty acid remodeling of GPI-anchored proteins is required for their raft association.</title>
        <authorList>
            <person name="Maeda Y."/>
            <person name="Tashima Y."/>
            <person name="Houjou T."/>
            <person name="Fujita M."/>
            <person name="Yoko-o T."/>
            <person name="Jigami Y."/>
            <person name="Taguchi R."/>
            <person name="Kinoshita T."/>
        </authorList>
    </citation>
    <scope>NUCLEOTIDE SEQUENCE [MRNA]</scope>
    <scope>FUNCTION</scope>
    <scope>CATALYTIC ACTIVITY</scope>
    <scope>SUBCELLULAR LOCATION</scope>
</reference>
<name>PGAP2_CRIGR</name>
<keyword id="KW-0333">Golgi apparatus</keyword>
<keyword id="KW-0337">GPI-anchor biosynthesis</keyword>
<keyword id="KW-0472">Membrane</keyword>
<keyword id="KW-0808">Transferase</keyword>
<keyword id="KW-0812">Transmembrane</keyword>
<keyword id="KW-1133">Transmembrane helix</keyword>
<proteinExistence type="evidence at protein level"/>
<feature type="chain" id="PRO_0000326093" description="Acyltransferase PGAP2">
    <location>
        <begin position="1"/>
        <end position="254"/>
    </location>
</feature>
<feature type="topological domain" description="Cytoplasmic" evidence="3">
    <location>
        <begin position="1"/>
        <end position="23"/>
    </location>
</feature>
<feature type="transmembrane region" description="Helical" evidence="3">
    <location>
        <begin position="24"/>
        <end position="44"/>
    </location>
</feature>
<feature type="topological domain" description="Lumenal" evidence="3">
    <location>
        <begin position="45"/>
        <end position="114"/>
    </location>
</feature>
<feature type="transmembrane region" description="Helical" evidence="3">
    <location>
        <begin position="115"/>
        <end position="135"/>
    </location>
</feature>
<feature type="topological domain" description="Cytoplasmic" evidence="3">
    <location>
        <begin position="136"/>
        <end position="143"/>
    </location>
</feature>
<feature type="transmembrane region" description="Helical" evidence="3">
    <location>
        <begin position="144"/>
        <end position="164"/>
    </location>
</feature>
<feature type="topological domain" description="Lumenal" evidence="3">
    <location>
        <begin position="165"/>
        <end position="185"/>
    </location>
</feature>
<feature type="transmembrane region" description="Helical" evidence="3">
    <location>
        <begin position="186"/>
        <end position="206"/>
    </location>
</feature>
<feature type="topological domain" description="Cytoplasmic" evidence="3">
    <location>
        <begin position="207"/>
        <end position="209"/>
    </location>
</feature>
<feature type="transmembrane region" description="Helical" evidence="3">
    <location>
        <begin position="210"/>
        <end position="230"/>
    </location>
</feature>
<feature type="topological domain" description="Lumenal" evidence="3">
    <location>
        <begin position="231"/>
        <end position="254"/>
    </location>
</feature>
<comment type="function">
    <text evidence="4 5 7 8">Involved in the fatty acid remodeling steps of GPI-anchor maturation where the unsaturated acyl chain at sn-2 of inositol phosphate is replaced by a saturated stearoyl chain (Probable) (PubMed:17314402). May catalyze the second step of the fatty acid remodeling, by reacylating a lyso-GPI intermediate at sn-2 of inositol phosphate by a saturated chain (Probable). The fatty acid remodeling steps is critical for the integration of GPI-APs into lipid rafts (PubMed:16407401, PubMed:17314402).</text>
</comment>
<comment type="subunit">
    <text evidence="1">Interacts with PGAP2IP.</text>
</comment>
<comment type="subcellular location">
    <subcellularLocation>
        <location evidence="2">Golgi apparatus membrane</location>
        <topology evidence="3">Multi-pass membrane protein</topology>
    </subcellularLocation>
</comment>
<comment type="similarity">
    <text evidence="6">Belongs to the PGAP2 family.</text>
</comment>